<comment type="function">
    <text evidence="1">Binds 23S rRNA and is also seen to make contacts with the A and possibly P site tRNAs.</text>
</comment>
<comment type="subunit">
    <text evidence="1">Part of the 50S ribosomal subunit.</text>
</comment>
<comment type="similarity">
    <text evidence="1">Belongs to the universal ribosomal protein uL16 family.</text>
</comment>
<proteinExistence type="inferred from homology"/>
<reference key="1">
    <citation type="submission" date="2007-06" db="EMBL/GenBank/DDBJ databases">
        <title>Complete sequence of Clostridium beijerinckii NCIMB 8052.</title>
        <authorList>
            <consortium name="US DOE Joint Genome Institute"/>
            <person name="Copeland A."/>
            <person name="Lucas S."/>
            <person name="Lapidus A."/>
            <person name="Barry K."/>
            <person name="Detter J.C."/>
            <person name="Glavina del Rio T."/>
            <person name="Hammon N."/>
            <person name="Israni S."/>
            <person name="Dalin E."/>
            <person name="Tice H."/>
            <person name="Pitluck S."/>
            <person name="Sims D."/>
            <person name="Brettin T."/>
            <person name="Bruce D."/>
            <person name="Tapia R."/>
            <person name="Brainard J."/>
            <person name="Schmutz J."/>
            <person name="Larimer F."/>
            <person name="Land M."/>
            <person name="Hauser L."/>
            <person name="Kyrpides N."/>
            <person name="Mikhailova N."/>
            <person name="Bennet G."/>
            <person name="Cann I."/>
            <person name="Chen J.-S."/>
            <person name="Contreras A.L."/>
            <person name="Jones D."/>
            <person name="Kashket E."/>
            <person name="Mitchell W."/>
            <person name="Stoddard S."/>
            <person name="Schwarz W."/>
            <person name="Qureshi N."/>
            <person name="Young M."/>
            <person name="Shi Z."/>
            <person name="Ezeji T."/>
            <person name="White B."/>
            <person name="Blaschek H."/>
            <person name="Richardson P."/>
        </authorList>
    </citation>
    <scope>NUCLEOTIDE SEQUENCE [LARGE SCALE GENOMIC DNA]</scope>
    <source>
        <strain>ATCC 51743 / NCIMB 8052</strain>
    </source>
</reference>
<evidence type="ECO:0000255" key="1">
    <source>
        <dbReference type="HAMAP-Rule" id="MF_01342"/>
    </source>
</evidence>
<evidence type="ECO:0000305" key="2"/>
<keyword id="KW-0687">Ribonucleoprotein</keyword>
<keyword id="KW-0689">Ribosomal protein</keyword>
<keyword id="KW-0694">RNA-binding</keyword>
<keyword id="KW-0699">rRNA-binding</keyword>
<keyword id="KW-0820">tRNA-binding</keyword>
<sequence>MLMPKRVKHRKVQRGRMKGKATRGNFLAYGDYGIQALTCGWITSNQIESARIAINRYIKRGGKLWIKIFPDKPVTEKPAETRMGSGKGSPEYWVAVVKPGRVLFELSGVPEETAREAMRLASHKLPVKTKFVSKRDFEEMGGEE</sequence>
<protein>
    <recommendedName>
        <fullName evidence="1">Large ribosomal subunit protein uL16</fullName>
    </recommendedName>
    <alternativeName>
        <fullName evidence="2">50S ribosomal protein L16</fullName>
    </alternativeName>
</protein>
<organism>
    <name type="scientific">Clostridium beijerinckii (strain ATCC 51743 / NCIMB 8052)</name>
    <name type="common">Clostridium acetobutylicum</name>
    <dbReference type="NCBI Taxonomy" id="290402"/>
    <lineage>
        <taxon>Bacteria</taxon>
        <taxon>Bacillati</taxon>
        <taxon>Bacillota</taxon>
        <taxon>Clostridia</taxon>
        <taxon>Eubacteriales</taxon>
        <taxon>Clostridiaceae</taxon>
        <taxon>Clostridium</taxon>
    </lineage>
</organism>
<feature type="chain" id="PRO_1000086748" description="Large ribosomal subunit protein uL16">
    <location>
        <begin position="1"/>
        <end position="144"/>
    </location>
</feature>
<dbReference type="EMBL" id="CP000721">
    <property type="protein sequence ID" value="ABR32348.1"/>
    <property type="molecule type" value="Genomic_DNA"/>
</dbReference>
<dbReference type="RefSeq" id="WP_008426579.1">
    <property type="nucleotide sequence ID" value="NC_009617.1"/>
</dbReference>
<dbReference type="SMR" id="A6LPR8"/>
<dbReference type="GeneID" id="66343048"/>
<dbReference type="KEGG" id="cbe:Cbei_0158"/>
<dbReference type="eggNOG" id="COG0197">
    <property type="taxonomic scope" value="Bacteria"/>
</dbReference>
<dbReference type="HOGENOM" id="CLU_078858_2_1_9"/>
<dbReference type="Proteomes" id="UP000000565">
    <property type="component" value="Chromosome"/>
</dbReference>
<dbReference type="GO" id="GO:0022625">
    <property type="term" value="C:cytosolic large ribosomal subunit"/>
    <property type="evidence" value="ECO:0007669"/>
    <property type="project" value="TreeGrafter"/>
</dbReference>
<dbReference type="GO" id="GO:0019843">
    <property type="term" value="F:rRNA binding"/>
    <property type="evidence" value="ECO:0007669"/>
    <property type="project" value="UniProtKB-UniRule"/>
</dbReference>
<dbReference type="GO" id="GO:0003735">
    <property type="term" value="F:structural constituent of ribosome"/>
    <property type="evidence" value="ECO:0007669"/>
    <property type="project" value="InterPro"/>
</dbReference>
<dbReference type="GO" id="GO:0000049">
    <property type="term" value="F:tRNA binding"/>
    <property type="evidence" value="ECO:0007669"/>
    <property type="project" value="UniProtKB-KW"/>
</dbReference>
<dbReference type="GO" id="GO:0006412">
    <property type="term" value="P:translation"/>
    <property type="evidence" value="ECO:0007669"/>
    <property type="project" value="UniProtKB-UniRule"/>
</dbReference>
<dbReference type="CDD" id="cd01433">
    <property type="entry name" value="Ribosomal_L16_L10e"/>
    <property type="match status" value="1"/>
</dbReference>
<dbReference type="FunFam" id="3.90.1170.10:FF:000001">
    <property type="entry name" value="50S ribosomal protein L16"/>
    <property type="match status" value="1"/>
</dbReference>
<dbReference type="Gene3D" id="3.90.1170.10">
    <property type="entry name" value="Ribosomal protein L10e/L16"/>
    <property type="match status" value="1"/>
</dbReference>
<dbReference type="HAMAP" id="MF_01342">
    <property type="entry name" value="Ribosomal_uL16"/>
    <property type="match status" value="1"/>
</dbReference>
<dbReference type="InterPro" id="IPR047873">
    <property type="entry name" value="Ribosomal_uL16"/>
</dbReference>
<dbReference type="InterPro" id="IPR000114">
    <property type="entry name" value="Ribosomal_uL16_bact-type"/>
</dbReference>
<dbReference type="InterPro" id="IPR020798">
    <property type="entry name" value="Ribosomal_uL16_CS"/>
</dbReference>
<dbReference type="InterPro" id="IPR016180">
    <property type="entry name" value="Ribosomal_uL16_dom"/>
</dbReference>
<dbReference type="InterPro" id="IPR036920">
    <property type="entry name" value="Ribosomal_uL16_sf"/>
</dbReference>
<dbReference type="NCBIfam" id="TIGR01164">
    <property type="entry name" value="rplP_bact"/>
    <property type="match status" value="1"/>
</dbReference>
<dbReference type="PANTHER" id="PTHR12220">
    <property type="entry name" value="50S/60S RIBOSOMAL PROTEIN L16"/>
    <property type="match status" value="1"/>
</dbReference>
<dbReference type="PANTHER" id="PTHR12220:SF13">
    <property type="entry name" value="LARGE RIBOSOMAL SUBUNIT PROTEIN UL16M"/>
    <property type="match status" value="1"/>
</dbReference>
<dbReference type="Pfam" id="PF00252">
    <property type="entry name" value="Ribosomal_L16"/>
    <property type="match status" value="1"/>
</dbReference>
<dbReference type="PRINTS" id="PR00060">
    <property type="entry name" value="RIBOSOMALL16"/>
</dbReference>
<dbReference type="SUPFAM" id="SSF54686">
    <property type="entry name" value="Ribosomal protein L16p/L10e"/>
    <property type="match status" value="1"/>
</dbReference>
<dbReference type="PROSITE" id="PS00586">
    <property type="entry name" value="RIBOSOMAL_L16_1"/>
    <property type="match status" value="1"/>
</dbReference>
<dbReference type="PROSITE" id="PS00701">
    <property type="entry name" value="RIBOSOMAL_L16_2"/>
    <property type="match status" value="1"/>
</dbReference>
<accession>A6LPR8</accession>
<gene>
    <name evidence="1" type="primary">rplP</name>
    <name type="ordered locus">Cbei_0158</name>
</gene>
<name>RL16_CLOB8</name>